<name>ARLY_PSEU2</name>
<protein>
    <recommendedName>
        <fullName evidence="1">Argininosuccinate lyase</fullName>
        <shortName evidence="1">ASAL</shortName>
        <ecNumber evidence="1">4.3.2.1</ecNumber>
    </recommendedName>
    <alternativeName>
        <fullName evidence="1">Arginosuccinase</fullName>
    </alternativeName>
</protein>
<feature type="chain" id="PRO_0000240755" description="Argininosuccinate lyase">
    <location>
        <begin position="1"/>
        <end position="464"/>
    </location>
</feature>
<keyword id="KW-0028">Amino-acid biosynthesis</keyword>
<keyword id="KW-0055">Arginine biosynthesis</keyword>
<keyword id="KW-0963">Cytoplasm</keyword>
<keyword id="KW-0456">Lyase</keyword>
<reference key="1">
    <citation type="journal article" date="2005" name="Proc. Natl. Acad. Sci. U.S.A.">
        <title>Comparison of the complete genome sequences of Pseudomonas syringae pv. syringae B728a and pv. tomato DC3000.</title>
        <authorList>
            <person name="Feil H."/>
            <person name="Feil W.S."/>
            <person name="Chain P."/>
            <person name="Larimer F."/>
            <person name="Dibartolo G."/>
            <person name="Copeland A."/>
            <person name="Lykidis A."/>
            <person name="Trong S."/>
            <person name="Nolan M."/>
            <person name="Goltsman E."/>
            <person name="Thiel J."/>
            <person name="Malfatti S."/>
            <person name="Loper J.E."/>
            <person name="Lapidus A."/>
            <person name="Detter J.C."/>
            <person name="Land M."/>
            <person name="Richardson P.M."/>
            <person name="Kyrpides N.C."/>
            <person name="Ivanova N."/>
            <person name="Lindow S.E."/>
        </authorList>
    </citation>
    <scope>NUCLEOTIDE SEQUENCE [LARGE SCALE GENOMIC DNA]</scope>
    <source>
        <strain>B728a</strain>
    </source>
</reference>
<organism>
    <name type="scientific">Pseudomonas syringae pv. syringae (strain B728a)</name>
    <dbReference type="NCBI Taxonomy" id="205918"/>
    <lineage>
        <taxon>Bacteria</taxon>
        <taxon>Pseudomonadati</taxon>
        <taxon>Pseudomonadota</taxon>
        <taxon>Gammaproteobacteria</taxon>
        <taxon>Pseudomonadales</taxon>
        <taxon>Pseudomonadaceae</taxon>
        <taxon>Pseudomonas</taxon>
        <taxon>Pseudomonas syringae</taxon>
    </lineage>
</organism>
<dbReference type="EC" id="4.3.2.1" evidence="1"/>
<dbReference type="EMBL" id="CP000075">
    <property type="protein sequence ID" value="AAY35139.1"/>
    <property type="molecule type" value="Genomic_DNA"/>
</dbReference>
<dbReference type="RefSeq" id="WP_003401567.1">
    <property type="nucleotide sequence ID" value="NC_007005.1"/>
</dbReference>
<dbReference type="RefSeq" id="YP_233177.1">
    <property type="nucleotide sequence ID" value="NC_007005.1"/>
</dbReference>
<dbReference type="SMR" id="Q500N3"/>
<dbReference type="STRING" id="205918.Psyr_0065"/>
<dbReference type="KEGG" id="psb:Psyr_0065"/>
<dbReference type="PATRIC" id="fig|205918.7.peg.64"/>
<dbReference type="eggNOG" id="COG0165">
    <property type="taxonomic scope" value="Bacteria"/>
</dbReference>
<dbReference type="HOGENOM" id="CLU_027272_2_3_6"/>
<dbReference type="OrthoDB" id="9769623at2"/>
<dbReference type="UniPathway" id="UPA00068">
    <property type="reaction ID" value="UER00114"/>
</dbReference>
<dbReference type="Proteomes" id="UP000000426">
    <property type="component" value="Chromosome"/>
</dbReference>
<dbReference type="GO" id="GO:0005829">
    <property type="term" value="C:cytosol"/>
    <property type="evidence" value="ECO:0007669"/>
    <property type="project" value="TreeGrafter"/>
</dbReference>
<dbReference type="GO" id="GO:0004056">
    <property type="term" value="F:argininosuccinate lyase activity"/>
    <property type="evidence" value="ECO:0007669"/>
    <property type="project" value="UniProtKB-UniRule"/>
</dbReference>
<dbReference type="GO" id="GO:0042450">
    <property type="term" value="P:arginine biosynthetic process via ornithine"/>
    <property type="evidence" value="ECO:0007669"/>
    <property type="project" value="InterPro"/>
</dbReference>
<dbReference type="GO" id="GO:0006526">
    <property type="term" value="P:L-arginine biosynthetic process"/>
    <property type="evidence" value="ECO:0007669"/>
    <property type="project" value="UniProtKB-UniRule"/>
</dbReference>
<dbReference type="CDD" id="cd01359">
    <property type="entry name" value="Argininosuccinate_lyase"/>
    <property type="match status" value="1"/>
</dbReference>
<dbReference type="FunFam" id="1.10.275.10:FF:000002">
    <property type="entry name" value="Argininosuccinate lyase"/>
    <property type="match status" value="1"/>
</dbReference>
<dbReference type="FunFam" id="1.10.40.30:FF:000001">
    <property type="entry name" value="Argininosuccinate lyase"/>
    <property type="match status" value="1"/>
</dbReference>
<dbReference type="FunFam" id="1.20.200.10:FF:000015">
    <property type="entry name" value="argininosuccinate lyase isoform X2"/>
    <property type="match status" value="1"/>
</dbReference>
<dbReference type="Gene3D" id="1.10.40.30">
    <property type="entry name" value="Fumarase/aspartase (C-terminal domain)"/>
    <property type="match status" value="1"/>
</dbReference>
<dbReference type="Gene3D" id="1.20.200.10">
    <property type="entry name" value="Fumarase/aspartase (Central domain)"/>
    <property type="match status" value="1"/>
</dbReference>
<dbReference type="Gene3D" id="1.10.275.10">
    <property type="entry name" value="Fumarase/aspartase (N-terminal domain)"/>
    <property type="match status" value="1"/>
</dbReference>
<dbReference type="HAMAP" id="MF_00006">
    <property type="entry name" value="Arg_succ_lyase"/>
    <property type="match status" value="1"/>
</dbReference>
<dbReference type="InterPro" id="IPR029419">
    <property type="entry name" value="Arg_succ_lyase_C"/>
</dbReference>
<dbReference type="InterPro" id="IPR009049">
    <property type="entry name" value="Argininosuccinate_lyase"/>
</dbReference>
<dbReference type="InterPro" id="IPR024083">
    <property type="entry name" value="Fumarase/histidase_N"/>
</dbReference>
<dbReference type="InterPro" id="IPR020557">
    <property type="entry name" value="Fumarate_lyase_CS"/>
</dbReference>
<dbReference type="InterPro" id="IPR000362">
    <property type="entry name" value="Fumarate_lyase_fam"/>
</dbReference>
<dbReference type="InterPro" id="IPR022761">
    <property type="entry name" value="Fumarate_lyase_N"/>
</dbReference>
<dbReference type="InterPro" id="IPR008948">
    <property type="entry name" value="L-Aspartase-like"/>
</dbReference>
<dbReference type="NCBIfam" id="TIGR00838">
    <property type="entry name" value="argH"/>
    <property type="match status" value="1"/>
</dbReference>
<dbReference type="PANTHER" id="PTHR43814">
    <property type="entry name" value="ARGININOSUCCINATE LYASE"/>
    <property type="match status" value="1"/>
</dbReference>
<dbReference type="PANTHER" id="PTHR43814:SF1">
    <property type="entry name" value="ARGININOSUCCINATE LYASE"/>
    <property type="match status" value="1"/>
</dbReference>
<dbReference type="Pfam" id="PF14698">
    <property type="entry name" value="ASL_C2"/>
    <property type="match status" value="1"/>
</dbReference>
<dbReference type="Pfam" id="PF00206">
    <property type="entry name" value="Lyase_1"/>
    <property type="match status" value="1"/>
</dbReference>
<dbReference type="PRINTS" id="PR00145">
    <property type="entry name" value="ARGSUCLYASE"/>
</dbReference>
<dbReference type="PRINTS" id="PR00149">
    <property type="entry name" value="FUMRATELYASE"/>
</dbReference>
<dbReference type="SUPFAM" id="SSF48557">
    <property type="entry name" value="L-aspartase-like"/>
    <property type="match status" value="1"/>
</dbReference>
<dbReference type="PROSITE" id="PS00163">
    <property type="entry name" value="FUMARATE_LYASES"/>
    <property type="match status" value="1"/>
</dbReference>
<comment type="catalytic activity">
    <reaction evidence="1">
        <text>2-(N(omega)-L-arginino)succinate = fumarate + L-arginine</text>
        <dbReference type="Rhea" id="RHEA:24020"/>
        <dbReference type="ChEBI" id="CHEBI:29806"/>
        <dbReference type="ChEBI" id="CHEBI:32682"/>
        <dbReference type="ChEBI" id="CHEBI:57472"/>
        <dbReference type="EC" id="4.3.2.1"/>
    </reaction>
</comment>
<comment type="pathway">
    <text evidence="1">Amino-acid biosynthesis; L-arginine biosynthesis; L-arginine from L-ornithine and carbamoyl phosphate: step 3/3.</text>
</comment>
<comment type="subcellular location">
    <subcellularLocation>
        <location evidence="1">Cytoplasm</location>
    </subcellularLocation>
</comment>
<comment type="similarity">
    <text evidence="1">Belongs to the lyase 1 family. Argininosuccinate lyase subfamily.</text>
</comment>
<proteinExistence type="inferred from homology"/>
<accession>Q500N3</accession>
<gene>
    <name evidence="1" type="primary">argH</name>
    <name type="ordered locus">Psyr_0065</name>
</gene>
<sequence length="464" mass="51820">MSTDKTNQSWGGRFSEPVDAFVARFTASVTFDQRLYRHDIMGSIAHATMLAKVGVLTDAERDTIVDGLNTIQAEIEAGQFDWRVDLEDVHMNIEARLTDRIGITGKKLHTGRSRNDQVATDIRLWLRDEIDLILSEITRLQQGLLGQAEREAETIMPGFTHLQTAQPVTFGHHMLAWFEMLSRDYERLVDCRKRLNRMPLGSAALAGTTYPIDRELTCTLLGFEVVGGNSLDGVSDRDFAIEFCSAASIAMMHLSRFSEELVLWTSAQFQFIDLPDRFCTGSSIMPQKKNPDVPELVRGKSGRVFGALMGLLTLMKGQPLAYNKDNQEDKEPLFDAADTLRDSLRAFADMIPAIKPRHAMMREAALRGFSTATDLADYLVRRGLPFRDCHEIVGHAVKYGVETGKDLAEMSLEELRQFSNQIEQDVFAVLTLEGSVNARNHIGGTAPEQVRAAVIRGQELLAGR</sequence>
<evidence type="ECO:0000255" key="1">
    <source>
        <dbReference type="HAMAP-Rule" id="MF_00006"/>
    </source>
</evidence>